<keyword id="KW-0997">Cell inner membrane</keyword>
<keyword id="KW-1003">Cell membrane</keyword>
<keyword id="KW-0143">Chaperone</keyword>
<keyword id="KW-0472">Membrane</keyword>
<keyword id="KW-0653">Protein transport</keyword>
<keyword id="KW-0812">Transmembrane</keyword>
<keyword id="KW-1133">Transmembrane helix</keyword>
<keyword id="KW-0813">Transport</keyword>
<name>YIDC_BORGP</name>
<protein>
    <recommendedName>
        <fullName evidence="1">Membrane protein insertase YidC</fullName>
    </recommendedName>
    <alternativeName>
        <fullName evidence="1">Foldase YidC</fullName>
    </alternativeName>
    <alternativeName>
        <fullName evidence="1">Membrane integrase YidC</fullName>
    </alternativeName>
    <alternativeName>
        <fullName evidence="1">Membrane protein YidC</fullName>
    </alternativeName>
</protein>
<sequence>MNQSKKILRTVYLSLFLIGLFMLINDIFSSIMLSFKSSDKEVQFDLNKSFDDNEIFLSKSNGFDLINKSQNIVVETEIYFATFSTFRGNLVSLKLKNHLNLEKDPTDLINVDYKNETFFDVSLDYLVEDLFLYKKIDNLNHEFKAYFKNHGKIYEYVKKYTFSEKNEYLMKFTVIVNSLNDYDLFDIDSYKIVFSSEIERLSDKAKLQYNNYLSQIIYYDNKLKYGKDGLSINNPRWIGSSTKYFEVLISRENMEVEFKKERGVLKSFIVNNVGNKKNISDEFFIYAGPKDNRYLDIFDKSGDNTFGLSDIAFGMSVEKSLWYLIQVPMQMVMQVFYDVIPNWGLSIIFLTIVVRILIFPLTFKGFRATAELSKLQPKMKELQVKFKHDPKKLNEEMGRLYKEEGVNPLGGCFPVILQLPIFFALYSLVNNLFLLRGASFIPGWIDDLSIGDSVYNFGYRLYFVSWTDIRILPFIMMFTQLGSTIVSSNLDLKNLGAQQKFLYFGMPIMFFFILYNMPSGLLIYWITTNIFTILQQYYIKMHLS</sequence>
<dbReference type="EMBL" id="CP000013">
    <property type="protein sequence ID" value="AAU07292.1"/>
    <property type="molecule type" value="Genomic_DNA"/>
</dbReference>
<dbReference type="RefSeq" id="WP_011193762.1">
    <property type="nucleotide sequence ID" value="NZ_CP028872.1"/>
</dbReference>
<dbReference type="SMR" id="Q661H9"/>
<dbReference type="GeneID" id="45161234"/>
<dbReference type="KEGG" id="bga:BG0449"/>
<dbReference type="eggNOG" id="COG0706">
    <property type="taxonomic scope" value="Bacteria"/>
</dbReference>
<dbReference type="HOGENOM" id="CLU_016535_2_0_12"/>
<dbReference type="OrthoDB" id="9780552at2"/>
<dbReference type="Proteomes" id="UP000002276">
    <property type="component" value="Chromosome"/>
</dbReference>
<dbReference type="GO" id="GO:0005886">
    <property type="term" value="C:plasma membrane"/>
    <property type="evidence" value="ECO:0007669"/>
    <property type="project" value="UniProtKB-SubCell"/>
</dbReference>
<dbReference type="GO" id="GO:0032977">
    <property type="term" value="F:membrane insertase activity"/>
    <property type="evidence" value="ECO:0007669"/>
    <property type="project" value="InterPro"/>
</dbReference>
<dbReference type="GO" id="GO:0051205">
    <property type="term" value="P:protein insertion into membrane"/>
    <property type="evidence" value="ECO:0007669"/>
    <property type="project" value="TreeGrafter"/>
</dbReference>
<dbReference type="GO" id="GO:0015031">
    <property type="term" value="P:protein transport"/>
    <property type="evidence" value="ECO:0007669"/>
    <property type="project" value="UniProtKB-KW"/>
</dbReference>
<dbReference type="CDD" id="cd20070">
    <property type="entry name" value="5TM_YidC_Alb3"/>
    <property type="match status" value="1"/>
</dbReference>
<dbReference type="Gene3D" id="2.70.98.90">
    <property type="match status" value="1"/>
</dbReference>
<dbReference type="HAMAP" id="MF_01810">
    <property type="entry name" value="YidC_type1"/>
    <property type="match status" value="1"/>
</dbReference>
<dbReference type="InterPro" id="IPR019998">
    <property type="entry name" value="Membr_insert_YidC"/>
</dbReference>
<dbReference type="InterPro" id="IPR001708">
    <property type="entry name" value="YidC/ALB3/OXA1/COX18"/>
</dbReference>
<dbReference type="InterPro" id="IPR028055">
    <property type="entry name" value="YidC/Oxa/ALB_C"/>
</dbReference>
<dbReference type="InterPro" id="IPR047196">
    <property type="entry name" value="YidC_ALB_C"/>
</dbReference>
<dbReference type="InterPro" id="IPR038221">
    <property type="entry name" value="YidC_periplasmic_sf"/>
</dbReference>
<dbReference type="NCBIfam" id="NF002358">
    <property type="entry name" value="PRK01318.2-5"/>
    <property type="match status" value="1"/>
</dbReference>
<dbReference type="NCBIfam" id="TIGR03592">
    <property type="entry name" value="yidC_oxa1_cterm"/>
    <property type="match status" value="1"/>
</dbReference>
<dbReference type="PANTHER" id="PTHR12428:SF65">
    <property type="entry name" value="CYTOCHROME C OXIDASE ASSEMBLY PROTEIN COX18, MITOCHONDRIAL"/>
    <property type="match status" value="1"/>
</dbReference>
<dbReference type="PANTHER" id="PTHR12428">
    <property type="entry name" value="OXA1"/>
    <property type="match status" value="1"/>
</dbReference>
<dbReference type="Pfam" id="PF02096">
    <property type="entry name" value="60KD_IMP"/>
    <property type="match status" value="1"/>
</dbReference>
<dbReference type="PRINTS" id="PR00701">
    <property type="entry name" value="60KDINNERMP"/>
</dbReference>
<organism>
    <name type="scientific">Borrelia garinii subsp. bavariensis (strain ATCC BAA-2496 / DSM 23469 / PBi)</name>
    <name type="common">Borreliella bavariensis</name>
    <dbReference type="NCBI Taxonomy" id="290434"/>
    <lineage>
        <taxon>Bacteria</taxon>
        <taxon>Pseudomonadati</taxon>
        <taxon>Spirochaetota</taxon>
        <taxon>Spirochaetia</taxon>
        <taxon>Spirochaetales</taxon>
        <taxon>Borreliaceae</taxon>
        <taxon>Borreliella</taxon>
    </lineage>
</organism>
<proteinExistence type="inferred from homology"/>
<gene>
    <name evidence="1" type="primary">yidC</name>
    <name type="ordered locus">BG0449</name>
</gene>
<accession>Q661H9</accession>
<feature type="chain" id="PRO_1000070063" description="Membrane protein insertase YidC">
    <location>
        <begin position="1"/>
        <end position="544"/>
    </location>
</feature>
<feature type="transmembrane region" description="Helical" evidence="1">
    <location>
        <begin position="15"/>
        <end position="35"/>
    </location>
</feature>
<feature type="transmembrane region" description="Helical" evidence="1">
    <location>
        <begin position="321"/>
        <end position="341"/>
    </location>
</feature>
<feature type="transmembrane region" description="Helical" evidence="1">
    <location>
        <begin position="343"/>
        <end position="363"/>
    </location>
</feature>
<feature type="transmembrane region" description="Helical" evidence="1">
    <location>
        <begin position="409"/>
        <end position="429"/>
    </location>
</feature>
<feature type="transmembrane region" description="Helical" evidence="1">
    <location>
        <begin position="506"/>
        <end position="526"/>
    </location>
</feature>
<evidence type="ECO:0000255" key="1">
    <source>
        <dbReference type="HAMAP-Rule" id="MF_01810"/>
    </source>
</evidence>
<comment type="function">
    <text evidence="1">Required for the insertion and/or proper folding and/or complex formation of integral membrane proteins into the membrane. Involved in integration of membrane proteins that insert both dependently and independently of the Sec translocase complex, as well as at least some lipoproteins. Aids folding of multispanning membrane proteins.</text>
</comment>
<comment type="subunit">
    <text evidence="1">Interacts with the Sec translocase complex via SecD. Specifically interacts with transmembrane segments of nascent integral membrane proteins during membrane integration.</text>
</comment>
<comment type="subcellular location">
    <subcellularLocation>
        <location evidence="1">Cell inner membrane</location>
        <topology evidence="1">Multi-pass membrane protein</topology>
    </subcellularLocation>
</comment>
<comment type="similarity">
    <text evidence="1">Belongs to the OXA1/ALB3/YidC family. Type 1 subfamily.</text>
</comment>
<reference key="1">
    <citation type="journal article" date="2004" name="Nucleic Acids Res.">
        <title>Comparative analysis of the Borrelia garinii genome.</title>
        <authorList>
            <person name="Gloeckner G."/>
            <person name="Lehmann R."/>
            <person name="Romualdi A."/>
            <person name="Pradella S."/>
            <person name="Schulte-Spechtel U."/>
            <person name="Schilhabel M."/>
            <person name="Wilske B."/>
            <person name="Suehnel J."/>
            <person name="Platzer M."/>
        </authorList>
    </citation>
    <scope>NUCLEOTIDE SEQUENCE [LARGE SCALE GENOMIC DNA]</scope>
    <source>
        <strain>ATCC BAA-2496 / DSM 23469 / PBi</strain>
    </source>
</reference>